<gene>
    <name evidence="7" type="primary">PI4KG4</name>
    <name evidence="10" type="ordered locus">Os02g0290500</name>
    <name evidence="7" type="ordered locus">LOC_Os02g18840</name>
    <name evidence="9" type="ORF">OJ1086_G08.5</name>
    <name evidence="8" type="ORF">OJ1756_H07.61</name>
    <name evidence="11" type="ORF">OsJ_06315</name>
</gene>
<keyword id="KW-0067">ATP-binding</keyword>
<keyword id="KW-0256">Endoplasmic reticulum</keyword>
<keyword id="KW-0287">Flowering</keyword>
<keyword id="KW-0418">Kinase</keyword>
<keyword id="KW-0547">Nucleotide-binding</keyword>
<keyword id="KW-0539">Nucleus</keyword>
<keyword id="KW-1185">Reference proteome</keyword>
<keyword id="KW-0677">Repeat</keyword>
<keyword id="KW-0808">Transferase</keyword>
<name>P4KG4_ORYSJ</name>
<feature type="chain" id="PRO_0000445342" description="Phosphatidylinositol 4-kinase gamma 4">
    <location>
        <begin position="1"/>
        <end position="565"/>
    </location>
</feature>
<feature type="domain" description="Ubiquitin-like 1" evidence="2">
    <location>
        <begin position="32"/>
        <end position="104"/>
    </location>
</feature>
<feature type="domain" description="Ubiquitin-like 2" evidence="2">
    <location>
        <begin position="109"/>
        <end position="187"/>
    </location>
</feature>
<feature type="domain" description="PI3K/PI4K catalytic" evidence="3">
    <location>
        <begin position="257"/>
        <end position="542"/>
    </location>
</feature>
<feature type="region of interest" description="G-loop" evidence="3">
    <location>
        <begin position="263"/>
        <end position="269"/>
    </location>
</feature>
<feature type="region of interest" description="Disordered" evidence="4">
    <location>
        <begin position="291"/>
        <end position="311"/>
    </location>
</feature>
<feature type="region of interest" description="Catalytic loop" evidence="3">
    <location>
        <begin position="402"/>
        <end position="410"/>
    </location>
</feature>
<feature type="region of interest" description="Activation loop" evidence="3">
    <location>
        <begin position="425"/>
        <end position="451"/>
    </location>
</feature>
<feature type="binding site" evidence="1">
    <location>
        <begin position="264"/>
        <end position="270"/>
    </location>
    <ligand>
        <name>ATP</name>
        <dbReference type="ChEBI" id="CHEBI:30616"/>
    </ligand>
</feature>
<feature type="binding site" evidence="1">
    <location>
        <position position="286"/>
    </location>
    <ligand>
        <name>ATP</name>
        <dbReference type="ChEBI" id="CHEBI:30616"/>
    </ligand>
</feature>
<feature type="binding site" evidence="1">
    <location>
        <begin position="369"/>
        <end position="372"/>
    </location>
    <ligand>
        <name>ATP</name>
        <dbReference type="ChEBI" id="CHEBI:30616"/>
    </ligand>
</feature>
<feature type="binding site" evidence="1">
    <location>
        <position position="427"/>
    </location>
    <ligand>
        <name>ATP</name>
        <dbReference type="ChEBI" id="CHEBI:30616"/>
    </ligand>
</feature>
<sequence length="565" mass="61806">MSSAGIATLSPLLDQFCFAPHGEPRLQQLDSIVIFLAMPGVAPMPMRVLHSDSVASVKLRIQQFKGFVTTKQRLVFSGHELSLNNSHVRDYGLTDGNVLHLVVRLADLRAISIETANGKKFQFQVESCCNVGYLKDKLSAESGQQLGSLKDQRLVFDGEELEDNQLIADISKKGAAVIHLFIRRPAKVQTQQGDKETVVTVVTPKDNDNLQTDALNLAKPAKGKPAPVEPIIANGKVKLSPAVMEMIYSTISGIENGYLPVMSTEGSGGVYFMKDSSGESNVAVFKPIDEEPMAKNNPRGLPLSTDGEGLKRGTRVGEGALREVAAYILDHPVYGCKSCDVPGFSGVPPTALVRCFHMGKGSNKVGSLQLFVDNNGSCEDMGPRAFPVKEVQKIAILDIRLANADRHAGNILVCQDGEDHLKLIPIDHGYCLPEKFEDCTFEWLYWPQAREPFGPETAAYIGSLDADKDIALLKFHGWALSPQCARVLRISTMLLKKGAERGLTPYDIGSILCRQTVKKESEIEAIIEEAEDAILPGTSEETFLETISEIMDFHLDKLAVKLKKF</sequence>
<evidence type="ECO:0000250" key="1">
    <source>
        <dbReference type="UniProtKB" id="Q9BTU6"/>
    </source>
</evidence>
<evidence type="ECO:0000255" key="2">
    <source>
        <dbReference type="PROSITE-ProRule" id="PRU00214"/>
    </source>
</evidence>
<evidence type="ECO:0000255" key="3">
    <source>
        <dbReference type="PROSITE-ProRule" id="PRU00269"/>
    </source>
</evidence>
<evidence type="ECO:0000256" key="4">
    <source>
        <dbReference type="SAM" id="MobiDB-lite"/>
    </source>
</evidence>
<evidence type="ECO:0000269" key="5">
    <source>
    </source>
</evidence>
<evidence type="ECO:0000303" key="6">
    <source>
    </source>
</evidence>
<evidence type="ECO:0000305" key="7"/>
<evidence type="ECO:0000312" key="8">
    <source>
        <dbReference type="EMBL" id="BAD21741.1"/>
    </source>
</evidence>
<evidence type="ECO:0000312" key="9">
    <source>
        <dbReference type="EMBL" id="BAD21748.1"/>
    </source>
</evidence>
<evidence type="ECO:0000312" key="10">
    <source>
        <dbReference type="EMBL" id="BAF08505.1"/>
    </source>
</evidence>
<evidence type="ECO:0000312" key="11">
    <source>
        <dbReference type="EMBL" id="EAZ22642.1"/>
    </source>
</evidence>
<dbReference type="EC" id="2.7.1.67" evidence="1"/>
<dbReference type="EMBL" id="AP004168">
    <property type="protein sequence ID" value="BAD21741.1"/>
    <property type="molecule type" value="Genomic_DNA"/>
</dbReference>
<dbReference type="EMBL" id="AP004212">
    <property type="protein sequence ID" value="BAD21748.1"/>
    <property type="molecule type" value="Genomic_DNA"/>
</dbReference>
<dbReference type="EMBL" id="AP008208">
    <property type="protein sequence ID" value="BAF08505.1"/>
    <property type="molecule type" value="Genomic_DNA"/>
</dbReference>
<dbReference type="EMBL" id="AP014958">
    <property type="protein sequence ID" value="BAS78188.1"/>
    <property type="molecule type" value="Genomic_DNA"/>
</dbReference>
<dbReference type="EMBL" id="CM000139">
    <property type="protein sequence ID" value="EAZ22642.1"/>
    <property type="molecule type" value="Genomic_DNA"/>
</dbReference>
<dbReference type="EMBL" id="AK065628">
    <property type="protein sequence ID" value="BAG89595.1"/>
    <property type="molecule type" value="mRNA"/>
</dbReference>
<dbReference type="SMR" id="Q6K881"/>
<dbReference type="FunCoup" id="Q6K881">
    <property type="interactions" value="1"/>
</dbReference>
<dbReference type="STRING" id="39947.Q6K881"/>
<dbReference type="PaxDb" id="39947-Q6K881"/>
<dbReference type="EnsemblPlants" id="Os02t0290500-01">
    <property type="protein sequence ID" value="Os02t0290500-01"/>
    <property type="gene ID" value="Os02g0290500"/>
</dbReference>
<dbReference type="GeneID" id="4329058"/>
<dbReference type="Gramene" id="Os02t0290500-01">
    <property type="protein sequence ID" value="Os02t0290500-01"/>
    <property type="gene ID" value="Os02g0290500"/>
</dbReference>
<dbReference type="KEGG" id="dosa:Os02g0290500"/>
<dbReference type="KEGG" id="osa:4329058"/>
<dbReference type="eggNOG" id="KOG0001">
    <property type="taxonomic scope" value="Eukaryota"/>
</dbReference>
<dbReference type="eggNOG" id="KOG2381">
    <property type="taxonomic scope" value="Eukaryota"/>
</dbReference>
<dbReference type="HOGENOM" id="CLU_023603_0_0_1"/>
<dbReference type="InParanoid" id="Q6K881"/>
<dbReference type="OMA" id="HMGKGSK"/>
<dbReference type="OrthoDB" id="5839at2759"/>
<dbReference type="Proteomes" id="UP000000763">
    <property type="component" value="Chromosome 2"/>
</dbReference>
<dbReference type="Proteomes" id="UP000007752">
    <property type="component" value="Chromosome 2"/>
</dbReference>
<dbReference type="Proteomes" id="UP000059680">
    <property type="component" value="Chromosome 2"/>
</dbReference>
<dbReference type="ExpressionAtlas" id="Q6K881">
    <property type="expression patterns" value="baseline and differential"/>
</dbReference>
<dbReference type="GO" id="GO:0005783">
    <property type="term" value="C:endoplasmic reticulum"/>
    <property type="evidence" value="ECO:0000314"/>
    <property type="project" value="UniProtKB"/>
</dbReference>
<dbReference type="GO" id="GO:0005634">
    <property type="term" value="C:nucleus"/>
    <property type="evidence" value="ECO:0000314"/>
    <property type="project" value="UniProtKB"/>
</dbReference>
<dbReference type="GO" id="GO:0004430">
    <property type="term" value="F:1-phosphatidylinositol 4-kinase activity"/>
    <property type="evidence" value="ECO:0007669"/>
    <property type="project" value="UniProtKB-EC"/>
</dbReference>
<dbReference type="GO" id="GO:0005524">
    <property type="term" value="F:ATP binding"/>
    <property type="evidence" value="ECO:0007669"/>
    <property type="project" value="UniProtKB-KW"/>
</dbReference>
<dbReference type="GO" id="GO:0009908">
    <property type="term" value="P:flower development"/>
    <property type="evidence" value="ECO:0007669"/>
    <property type="project" value="UniProtKB-KW"/>
</dbReference>
<dbReference type="GO" id="GO:0048579">
    <property type="term" value="P:negative regulation of long-day photoperiodism, flowering"/>
    <property type="evidence" value="ECO:0000315"/>
    <property type="project" value="UniProtKB"/>
</dbReference>
<dbReference type="CDD" id="cd17039">
    <property type="entry name" value="Ubl_ubiquitin_like"/>
    <property type="match status" value="1"/>
</dbReference>
<dbReference type="FunFam" id="3.10.20.90:FF:000307">
    <property type="entry name" value="Phosphatidylinositol 4-kinase gamma 4"/>
    <property type="match status" value="1"/>
</dbReference>
<dbReference type="Gene3D" id="3.10.20.90">
    <property type="entry name" value="Phosphatidylinositol 3-kinase Catalytic Subunit, Chain A, domain 1"/>
    <property type="match status" value="2"/>
</dbReference>
<dbReference type="InterPro" id="IPR011009">
    <property type="entry name" value="Kinase-like_dom_sf"/>
</dbReference>
<dbReference type="InterPro" id="IPR044571">
    <property type="entry name" value="P4KG1-8"/>
</dbReference>
<dbReference type="InterPro" id="IPR000403">
    <property type="entry name" value="PI3/4_kinase_cat_dom"/>
</dbReference>
<dbReference type="InterPro" id="IPR000626">
    <property type="entry name" value="Ubiquitin-like_dom"/>
</dbReference>
<dbReference type="InterPro" id="IPR029071">
    <property type="entry name" value="Ubiquitin-like_domsf"/>
</dbReference>
<dbReference type="PANTHER" id="PTHR45800">
    <property type="entry name" value="PHOSPHATIDYLINOSITOL 4-KINASE GAMMA"/>
    <property type="match status" value="1"/>
</dbReference>
<dbReference type="PANTHER" id="PTHR45800:SF3">
    <property type="entry name" value="PHOSPHATIDYLINOSITOL 4-KINASE GAMMA 4"/>
    <property type="match status" value="1"/>
</dbReference>
<dbReference type="Pfam" id="PF00454">
    <property type="entry name" value="PI3_PI4_kinase"/>
    <property type="match status" value="1"/>
</dbReference>
<dbReference type="Pfam" id="PF00240">
    <property type="entry name" value="ubiquitin"/>
    <property type="match status" value="2"/>
</dbReference>
<dbReference type="SMART" id="SM00213">
    <property type="entry name" value="UBQ"/>
    <property type="match status" value="2"/>
</dbReference>
<dbReference type="SUPFAM" id="SSF56112">
    <property type="entry name" value="Protein kinase-like (PK-like)"/>
    <property type="match status" value="1"/>
</dbReference>
<dbReference type="SUPFAM" id="SSF54236">
    <property type="entry name" value="Ubiquitin-like"/>
    <property type="match status" value="2"/>
</dbReference>
<dbReference type="PROSITE" id="PS50290">
    <property type="entry name" value="PI3_4_KINASE_3"/>
    <property type="match status" value="1"/>
</dbReference>
<dbReference type="PROSITE" id="PS50053">
    <property type="entry name" value="UBIQUITIN_2"/>
    <property type="match status" value="2"/>
</dbReference>
<protein>
    <recommendedName>
        <fullName evidence="7">Phosphatidylinositol 4-kinase gamma 4</fullName>
        <shortName evidence="7">PI-4Kgamma4</shortName>
        <shortName evidence="7">PI4K gamma 4</shortName>
        <ecNumber evidence="1">2.7.1.67</ecNumber>
    </recommendedName>
    <alternativeName>
        <fullName evidence="6">Ubiquitin-like domain kinase gamma 4</fullName>
        <shortName evidence="6">OsUbDKgamma4</shortName>
        <shortName evidence="6">UbDKgamma4</shortName>
    </alternativeName>
</protein>
<comment type="function">
    <text evidence="1 5">The phosphorylation of phosphatidylinositol (PI) to PI4P is the first committed step in the generation of phosphatidylinositol 4,5-bisphosphate (PIP2), a precursor of the second messenger inositol 1,4,5-trisphosphate (InsP3) (By similarity). Involved in the control of flowering under long day conditions by promoting degradation of FTIP1 (PubMed:28254780). Recruits FTIP1 for degradation by the 26S proteasome in leaves, which affects RFT1 transport to the shoot apical meristem (SAM) (PubMed:28254780).</text>
</comment>
<comment type="catalytic activity">
    <reaction evidence="1">
        <text>a 1,2-diacyl-sn-glycero-3-phospho-(1D-myo-inositol) + ATP = a 1,2-diacyl-sn-glycero-3-phospho-(1D-myo-inositol 4-phosphate) + ADP + H(+)</text>
        <dbReference type="Rhea" id="RHEA:19877"/>
        <dbReference type="ChEBI" id="CHEBI:15378"/>
        <dbReference type="ChEBI" id="CHEBI:30616"/>
        <dbReference type="ChEBI" id="CHEBI:57880"/>
        <dbReference type="ChEBI" id="CHEBI:58178"/>
        <dbReference type="ChEBI" id="CHEBI:456216"/>
        <dbReference type="EC" id="2.7.1.67"/>
    </reaction>
</comment>
<comment type="subunit">
    <text evidence="5">Interacts with FTIP1 and RPN10.</text>
</comment>
<comment type="subcellular location">
    <subcellularLocation>
        <location evidence="5">Nucleus</location>
    </subcellularLocation>
    <subcellularLocation>
        <location evidence="5">Endoplasmic reticulum</location>
    </subcellularLocation>
</comment>
<comment type="tissue specificity">
    <text evidence="5">Specifically expressed in the phloem including companion cells.</text>
</comment>
<comment type="disruption phenotype">
    <text evidence="5">Early flowering phenotype under long day conditions.</text>
</comment>
<comment type="similarity">
    <text evidence="7">Belongs to the PI3/PI4-kinase family. Type II PI4K subfamily.</text>
</comment>
<reference key="1">
    <citation type="journal article" date="2005" name="Nature">
        <title>The map-based sequence of the rice genome.</title>
        <authorList>
            <consortium name="International rice genome sequencing project (IRGSP)"/>
        </authorList>
    </citation>
    <scope>NUCLEOTIDE SEQUENCE [LARGE SCALE GENOMIC DNA]</scope>
    <source>
        <strain>cv. Nipponbare</strain>
    </source>
</reference>
<reference key="2">
    <citation type="journal article" date="2008" name="Nucleic Acids Res.">
        <title>The rice annotation project database (RAP-DB): 2008 update.</title>
        <authorList>
            <consortium name="The rice annotation project (RAP)"/>
        </authorList>
    </citation>
    <scope>GENOME REANNOTATION</scope>
    <source>
        <strain>cv. Nipponbare</strain>
    </source>
</reference>
<reference key="3">
    <citation type="journal article" date="2013" name="Rice">
        <title>Improvement of the Oryza sativa Nipponbare reference genome using next generation sequence and optical map data.</title>
        <authorList>
            <person name="Kawahara Y."/>
            <person name="de la Bastide M."/>
            <person name="Hamilton J.P."/>
            <person name="Kanamori H."/>
            <person name="McCombie W.R."/>
            <person name="Ouyang S."/>
            <person name="Schwartz D.C."/>
            <person name="Tanaka T."/>
            <person name="Wu J."/>
            <person name="Zhou S."/>
            <person name="Childs K.L."/>
            <person name="Davidson R.M."/>
            <person name="Lin H."/>
            <person name="Quesada-Ocampo L."/>
            <person name="Vaillancourt B."/>
            <person name="Sakai H."/>
            <person name="Lee S.S."/>
            <person name="Kim J."/>
            <person name="Numa H."/>
            <person name="Itoh T."/>
            <person name="Buell C.R."/>
            <person name="Matsumoto T."/>
        </authorList>
    </citation>
    <scope>GENOME REANNOTATION</scope>
    <source>
        <strain>cv. Nipponbare</strain>
    </source>
</reference>
<reference key="4">
    <citation type="journal article" date="2005" name="PLoS Biol.">
        <title>The genomes of Oryza sativa: a history of duplications.</title>
        <authorList>
            <person name="Yu J."/>
            <person name="Wang J."/>
            <person name="Lin W."/>
            <person name="Li S."/>
            <person name="Li H."/>
            <person name="Zhou J."/>
            <person name="Ni P."/>
            <person name="Dong W."/>
            <person name="Hu S."/>
            <person name="Zeng C."/>
            <person name="Zhang J."/>
            <person name="Zhang Y."/>
            <person name="Li R."/>
            <person name="Xu Z."/>
            <person name="Li S."/>
            <person name="Li X."/>
            <person name="Zheng H."/>
            <person name="Cong L."/>
            <person name="Lin L."/>
            <person name="Yin J."/>
            <person name="Geng J."/>
            <person name="Li G."/>
            <person name="Shi J."/>
            <person name="Liu J."/>
            <person name="Lv H."/>
            <person name="Li J."/>
            <person name="Wang J."/>
            <person name="Deng Y."/>
            <person name="Ran L."/>
            <person name="Shi X."/>
            <person name="Wang X."/>
            <person name="Wu Q."/>
            <person name="Li C."/>
            <person name="Ren X."/>
            <person name="Wang J."/>
            <person name="Wang X."/>
            <person name="Li D."/>
            <person name="Liu D."/>
            <person name="Zhang X."/>
            <person name="Ji Z."/>
            <person name="Zhao W."/>
            <person name="Sun Y."/>
            <person name="Zhang Z."/>
            <person name="Bao J."/>
            <person name="Han Y."/>
            <person name="Dong L."/>
            <person name="Ji J."/>
            <person name="Chen P."/>
            <person name="Wu S."/>
            <person name="Liu J."/>
            <person name="Xiao Y."/>
            <person name="Bu D."/>
            <person name="Tan J."/>
            <person name="Yang L."/>
            <person name="Ye C."/>
            <person name="Zhang J."/>
            <person name="Xu J."/>
            <person name="Zhou Y."/>
            <person name="Yu Y."/>
            <person name="Zhang B."/>
            <person name="Zhuang S."/>
            <person name="Wei H."/>
            <person name="Liu B."/>
            <person name="Lei M."/>
            <person name="Yu H."/>
            <person name="Li Y."/>
            <person name="Xu H."/>
            <person name="Wei S."/>
            <person name="He X."/>
            <person name="Fang L."/>
            <person name="Zhang Z."/>
            <person name="Zhang Y."/>
            <person name="Huang X."/>
            <person name="Su Z."/>
            <person name="Tong W."/>
            <person name="Li J."/>
            <person name="Tong Z."/>
            <person name="Li S."/>
            <person name="Ye J."/>
            <person name="Wang L."/>
            <person name="Fang L."/>
            <person name="Lei T."/>
            <person name="Chen C.-S."/>
            <person name="Chen H.-C."/>
            <person name="Xu Z."/>
            <person name="Li H."/>
            <person name="Huang H."/>
            <person name="Zhang F."/>
            <person name="Xu H."/>
            <person name="Li N."/>
            <person name="Zhao C."/>
            <person name="Li S."/>
            <person name="Dong L."/>
            <person name="Huang Y."/>
            <person name="Li L."/>
            <person name="Xi Y."/>
            <person name="Qi Q."/>
            <person name="Li W."/>
            <person name="Zhang B."/>
            <person name="Hu W."/>
            <person name="Zhang Y."/>
            <person name="Tian X."/>
            <person name="Jiao Y."/>
            <person name="Liang X."/>
            <person name="Jin J."/>
            <person name="Gao L."/>
            <person name="Zheng W."/>
            <person name="Hao B."/>
            <person name="Liu S.-M."/>
            <person name="Wang W."/>
            <person name="Yuan L."/>
            <person name="Cao M."/>
            <person name="McDermott J."/>
            <person name="Samudrala R."/>
            <person name="Wang J."/>
            <person name="Wong G.K.-S."/>
            <person name="Yang H."/>
        </authorList>
    </citation>
    <scope>NUCLEOTIDE SEQUENCE [LARGE SCALE GENOMIC DNA]</scope>
    <source>
        <strain>cv. Nipponbare</strain>
    </source>
</reference>
<reference key="5">
    <citation type="journal article" date="2003" name="Science">
        <title>Collection, mapping, and annotation of over 28,000 cDNA clones from japonica rice.</title>
        <authorList>
            <consortium name="The rice full-length cDNA consortium"/>
        </authorList>
    </citation>
    <scope>NUCLEOTIDE SEQUENCE [LARGE SCALE MRNA]</scope>
    <source>
        <strain>cv. Nipponbare</strain>
    </source>
</reference>
<reference key="6">
    <citation type="journal article" date="2017" name="Plant Cell">
        <title>OsFTIP1-mediated regulation of florigen transport in rice is negatively regulated by the ubiquitin-like domain kinase OsUbDKgamma4.</title>
        <authorList>
            <person name="Song S."/>
            <person name="Chen Y."/>
            <person name="Liu L."/>
            <person name="Wang Y."/>
            <person name="Bao S."/>
            <person name="Zhou X."/>
            <person name="Teo Z.W."/>
            <person name="Mao C."/>
            <person name="Gan Y."/>
            <person name="Yu H."/>
        </authorList>
    </citation>
    <scope>FUNCTION</scope>
    <scope>INTERACTION WITH FTIP1 AND RPN10</scope>
    <scope>SUBCELLULAR LOCATION</scope>
    <scope>TISSUE SPECIFICITY</scope>
    <scope>DISRUPTION PHENOTYPE</scope>
</reference>
<proteinExistence type="evidence at protein level"/>
<organism>
    <name type="scientific">Oryza sativa subsp. japonica</name>
    <name type="common">Rice</name>
    <dbReference type="NCBI Taxonomy" id="39947"/>
    <lineage>
        <taxon>Eukaryota</taxon>
        <taxon>Viridiplantae</taxon>
        <taxon>Streptophyta</taxon>
        <taxon>Embryophyta</taxon>
        <taxon>Tracheophyta</taxon>
        <taxon>Spermatophyta</taxon>
        <taxon>Magnoliopsida</taxon>
        <taxon>Liliopsida</taxon>
        <taxon>Poales</taxon>
        <taxon>Poaceae</taxon>
        <taxon>BOP clade</taxon>
        <taxon>Oryzoideae</taxon>
        <taxon>Oryzeae</taxon>
        <taxon>Oryzinae</taxon>
        <taxon>Oryza</taxon>
        <taxon>Oryza sativa</taxon>
    </lineage>
</organism>
<accession>Q6K881</accession>